<accession>Q7BLV3</accession>
<accession>O68389</accession>
<accession>O85457</accession>
<protein>
    <recommendedName>
        <fullName>Hyaluronan synthase</fullName>
        <ecNumber>2.4.1.212</ecNumber>
    </recommendedName>
    <domain>
        <recommendedName>
            <fullName>Glucuronosyl-N-acetylglucosaminyl-proteoglycan 4-beta-N-acetylglucosaminyltransferase</fullName>
        </recommendedName>
        <alternativeName>
            <fullName>UDP-GlcNAc transferase</fullName>
        </alternativeName>
    </domain>
    <domain>
        <recommendedName>
            <fullName>N-acetylgalactosaminyl-proteoglycan 3-beta-glucuronosyltransferase</fullName>
            <ecNumber>2.4.1.226</ecNumber>
        </recommendedName>
        <alternativeName>
            <fullName>UDP-GlcUA transferase</fullName>
        </alternativeName>
    </domain>
</protein>
<gene>
    <name type="primary">hyaD</name>
</gene>
<comment type="function">
    <text>Catalyzes the polymerization of hyaluronan, a polysaccharide composed of a repeating disaccharide of N-acetylglucosamine (GlcNAc) and glucuronic acid (GlcUA) units. Each unit has the composition in beta-(1-&gt;4)-GlcUA-beta-(1-&gt;3)-GlcNAc.</text>
</comment>
<comment type="catalytic activity">
    <reaction>
        <text>[hyaluronan](n) + UDP-N-acetyl-alpha-D-glucosamine = N-acetyl-beta-D-glucosaminyl-(1-&gt;4)-[hyaluronan](n) + UDP + H(+)</text>
        <dbReference type="Rhea" id="RHEA:20465"/>
        <dbReference type="Rhea" id="RHEA-COMP:12583"/>
        <dbReference type="Rhea" id="RHEA-COMP:12585"/>
        <dbReference type="ChEBI" id="CHEBI:15378"/>
        <dbReference type="ChEBI" id="CHEBI:57705"/>
        <dbReference type="ChEBI" id="CHEBI:58223"/>
        <dbReference type="ChEBI" id="CHEBI:132153"/>
        <dbReference type="ChEBI" id="CHEBI:132154"/>
        <dbReference type="EC" id="2.4.1.212"/>
    </reaction>
</comment>
<comment type="catalytic activity">
    <reaction>
        <text>N-acetyl-beta-D-glucosaminyl-(1-&gt;4)-[hyaluronan](n) + UDP-alpha-D-glucuronate = [hyaluronan](n+1) + UDP + H(+)</text>
        <dbReference type="Rhea" id="RHEA:12528"/>
        <dbReference type="Rhea" id="RHEA-COMP:12585"/>
        <dbReference type="Rhea" id="RHEA-COMP:12587"/>
        <dbReference type="ChEBI" id="CHEBI:15378"/>
        <dbReference type="ChEBI" id="CHEBI:58052"/>
        <dbReference type="ChEBI" id="CHEBI:58223"/>
        <dbReference type="ChEBI" id="CHEBI:132153"/>
        <dbReference type="ChEBI" id="CHEBI:132154"/>
        <dbReference type="EC" id="2.4.1.212"/>
    </reaction>
</comment>
<comment type="catalytic activity">
    <reaction>
        <text>3-O-(beta-D-GalNAc-(1-&gt;4)-beta-D-GlcA-(1-&gt;3)-beta-D-Gal-(1-&gt;3)-beta-D-Gal-(1-&gt;4)-beta-D-Xyl)-L-seryl-[protein] + UDP-alpha-D-glucuronate = 3-O-(beta-D-GlcA-(1-&gt;3)-beta-D-GalNAc-(1-&gt;4)-beta-D-GlcA-(1-&gt;3)-beta-D-Gal-(1-&gt;3)-beta-D-Gal-(1-&gt;4)-beta-D-Xyl)-L-seryl-[protein] + UDP + H(+)</text>
        <dbReference type="Rhea" id="RHEA:23428"/>
        <dbReference type="Rhea" id="RHEA-COMP:12575"/>
        <dbReference type="Rhea" id="RHEA-COMP:14058"/>
        <dbReference type="ChEBI" id="CHEBI:15378"/>
        <dbReference type="ChEBI" id="CHEBI:58052"/>
        <dbReference type="ChEBI" id="CHEBI:58223"/>
        <dbReference type="ChEBI" id="CHEBI:132105"/>
        <dbReference type="ChEBI" id="CHEBI:138442"/>
        <dbReference type="EC" id="2.4.1.226"/>
    </reaction>
</comment>
<comment type="catalytic activity">
    <reaction>
        <text>3-O-{[beta-D-GalNAc-(1-&gt;4)-beta-D-GlcA-(1-&gt;3)](n)-beta-D-GalNAc-(1-&gt;4)-beta-D-GlcA-(1-&gt;3)-beta-D-Gal-(1-&gt;3)-beta-D-Gal-(1-&gt;4)-beta-D-Xyl}-L-seryl-[protein] + UDP-alpha-D-glucuronate = 3-O-{beta-D-GlcA-(1-&gt;3)-[beta-D-GalNAc-(1-&gt;4)-beta-D-GlcA-(1-&gt;3)](n)-beta-D-GalNAc-(1-&gt;4)-beta-D-GlcA-(1-&gt;3)-beta-D-Gal-(1-&gt;3)-beta-D-Gal-(1-&gt;4)-beta-D-Xyl}-L-seryl-[protein] + UDP + H(+)</text>
        <dbReference type="Rhea" id="RHEA:54996"/>
        <dbReference type="Rhea" id="RHEA-COMP:14060"/>
        <dbReference type="Rhea" id="RHEA-COMP:14061"/>
        <dbReference type="ChEBI" id="CHEBI:15378"/>
        <dbReference type="ChEBI" id="CHEBI:58052"/>
        <dbReference type="ChEBI" id="CHEBI:58223"/>
        <dbReference type="ChEBI" id="CHEBI:138444"/>
        <dbReference type="ChEBI" id="CHEBI:138445"/>
        <dbReference type="EC" id="2.4.1.226"/>
    </reaction>
</comment>
<comment type="cofactor">
    <cofactor>
        <name>Mg(2+)</name>
        <dbReference type="ChEBI" id="CHEBI:18420"/>
    </cofactor>
    <cofactor>
        <name>Co(2+)</name>
        <dbReference type="ChEBI" id="CHEBI:48828"/>
    </cofactor>
</comment>
<comment type="biophysicochemical properties">
    <kinetics>
        <KM>160 uM for UDP-N-acetyl-D-glucosamine</KM>
        <KM>140 uM for UDP-D-glucuronate</KM>
    </kinetics>
</comment>
<comment type="subcellular location">
    <subcellularLocation>
        <location>Cell membrane</location>
        <topology>Peripheral membrane protein</topology>
    </subcellularLocation>
</comment>
<comment type="similarity">
    <text evidence="3">Belongs to the glycosyltransferase 2 family. CS/HAS subfamily.</text>
</comment>
<feature type="chain" id="PRO_0000059259" description="Hyaluronan synthase">
    <location>
        <begin position="1"/>
        <end position="972"/>
    </location>
</feature>
<feature type="region of interest" description="A1">
    <location>
        <begin position="152"/>
        <end position="325"/>
    </location>
</feature>
<feature type="region of interest" description="A2">
    <location>
        <begin position="432"/>
        <end position="604"/>
    </location>
</feature>
<feature type="mutagenesis site" description="Complete loss of GlcNAc transferase activity." evidence="1">
    <original>D</original>
    <variation>E</variation>
    <variation>K</variation>
    <variation>N</variation>
    <location>
        <position position="196"/>
    </location>
</feature>
<feature type="mutagenesis site" description="Complete loss of GlcNAc transferase activity." evidence="2">
    <original>D</original>
    <variation>E</variation>
    <variation>K</variation>
    <variation>N</variation>
    <location>
        <position position="247"/>
    </location>
</feature>
<feature type="mutagenesis site" description="Complete loss of GlcNAc transferase activity." evidence="2">
    <original>D</original>
    <variation>E</variation>
    <variation>K</variation>
    <variation>N</variation>
    <location>
        <position position="249"/>
    </location>
</feature>
<feature type="mutagenesis site" description="Complete loss of GlcNAc transferase activity. Regains 30% of wild-type activity at high UDP-GlcNAc concentrations." evidence="2">
    <original>E</original>
    <variation>D</variation>
    <location>
        <position position="369"/>
    </location>
</feature>
<feature type="mutagenesis site" description="Complete loss of GlcNAc transferase activity." evidence="2">
    <original>E</original>
    <variation>H</variation>
    <variation>Q</variation>
    <location>
        <position position="369"/>
    </location>
</feature>
<feature type="mutagenesis site" description="Complete loss of GlcNAc transferase activity." evidence="2">
    <original>D</original>
    <variation>E</variation>
    <variation>K</variation>
    <variation>N</variation>
    <location>
        <position position="370"/>
    </location>
</feature>
<feature type="mutagenesis site" description="Complete loss of GlcUA transferase activity." evidence="1">
    <original>D</original>
    <variation>E</variation>
    <variation>K</variation>
    <variation>N</variation>
    <location>
        <position position="477"/>
    </location>
</feature>
<feature type="mutagenesis site" description="Complete loss of GlcUA transferase activity." evidence="2">
    <original>D</original>
    <variation>E</variation>
    <variation>K</variation>
    <variation>N</variation>
    <location>
        <position position="527"/>
    </location>
</feature>
<feature type="mutagenesis site" description="90% loss of GlcUA transferase activity." evidence="2">
    <original>D</original>
    <variation>E</variation>
    <location>
        <position position="529"/>
    </location>
</feature>
<feature type="mutagenesis site" description="Complete loss of GlcUA transferase activity." evidence="2">
    <original>D</original>
    <variation>K</variation>
    <variation>N</variation>
    <location>
        <position position="529"/>
    </location>
</feature>
<feature type="mutagenesis site" description="No effect." evidence="2">
    <original>D</original>
    <variation>E</variation>
    <variation>K</variation>
    <variation>N</variation>
    <location>
        <position position="563"/>
    </location>
</feature>
<feature type="sequence conflict" description="In Ref. 1; AAC67250." evidence="3" ref="1">
    <original>Q</original>
    <variation>E</variation>
    <location>
        <position position="17"/>
    </location>
</feature>
<feature type="sequence conflict" description="In Ref. 5; AAF68412." evidence="3" ref="5">
    <original>K</original>
    <variation>Q</variation>
    <location>
        <position position="43"/>
    </location>
</feature>
<reference key="1">
    <citation type="journal article" date="1998" name="FEMS Microbiol. Lett.">
        <title>The capsule biosynthetic locus of Pasteurella multocida A:1.</title>
        <authorList>
            <person name="Chung J.Y."/>
            <person name="Zhang Y."/>
            <person name="Adler B."/>
        </authorList>
    </citation>
    <scope>NUCLEOTIDE SEQUENCE [GENOMIC DNA]</scope>
    <source>
        <strain>Serogroup A:1 / X73</strain>
    </source>
</reference>
<reference key="2">
    <citation type="submission" date="2000-05" db="EMBL/GenBank/DDBJ databases">
        <authorList>
            <person name="Chung J.Y."/>
            <person name="Zhang Y."/>
            <person name="Adler B."/>
        </authorList>
    </citation>
    <scope>SEQUENCE REVISION TO 855-972</scope>
</reference>
<reference key="3">
    <citation type="journal article" date="1998" name="J. Biol. Chem.">
        <title>Identification and molecular cloning of a unique hyaluronan synthase from Pasteurella multocida.</title>
        <authorList>
            <person name="DeAngelis P.L."/>
            <person name="Jing W."/>
            <person name="Drake R.R."/>
            <person name="Achyuthan A.M."/>
        </authorList>
    </citation>
    <scope>NUCLEOTIDE SEQUENCE [GENOMIC DNA]</scope>
    <source>
        <strain>ATCC 15742 / P1059</strain>
    </source>
</reference>
<reference key="4">
    <citation type="submission" date="2004-03" db="EMBL/GenBank/DDBJ databases">
        <authorList>
            <person name="DeAngelis P.L."/>
            <person name="Jing W."/>
            <person name="Achyuthan A.M."/>
        </authorList>
    </citation>
    <scope>SEQUENCE REVISION TO 43</scope>
</reference>
<reference key="5">
    <citation type="journal article" date="2000" name="Microb. Pathog.">
        <title>Identification of Pasteurella multocida virulence genes in a septicemic mouse model using signature-tagged mutagenesis.</title>
        <authorList>
            <person name="Fuller T.E."/>
            <person name="Kennedy M.J."/>
            <person name="Lowery D.E."/>
        </authorList>
    </citation>
    <scope>NUCLEOTIDE SEQUENCE [GENOMIC DNA]</scope>
</reference>
<reference key="6">
    <citation type="journal article" date="2000" name="Glycobiology">
        <title>Dissection of the two transferase activities of the Pasteurella multocida hyaluronan synthase: two active sites exist in one polypeptide.</title>
        <authorList>
            <person name="Jing W."/>
            <person name="DeAngelis P.L."/>
        </authorList>
    </citation>
    <scope>CHARACTERIZATION</scope>
    <scope>MUTAGENESIS OF ASP-196 AND ASP-477</scope>
    <source>
        <strain>ATCC 15742 / P1059</strain>
    </source>
</reference>
<reference key="7">
    <citation type="journal article" date="2003" name="Glycobiology">
        <title>Analysis of the two active sites of the hyaluronan synthase and the chondroitin synthase of Pasteurella multocida.</title>
        <authorList>
            <person name="Jing W."/>
            <person name="DeAngelis P.L."/>
        </authorList>
    </citation>
    <scope>CHARACTERIZATION</scope>
    <scope>MUTAGENESIS OF ASP-247; ASP-249; GLU-369; ASP-370; ASP-527; ASP-529 AND ASP-563</scope>
</reference>
<organism>
    <name type="scientific">Pasteurella multocida</name>
    <dbReference type="NCBI Taxonomy" id="747"/>
    <lineage>
        <taxon>Bacteria</taxon>
        <taxon>Pseudomonadati</taxon>
        <taxon>Pseudomonadota</taxon>
        <taxon>Gammaproteobacteria</taxon>
        <taxon>Pasteurellales</taxon>
        <taxon>Pasteurellaceae</taxon>
        <taxon>Pasteurella</taxon>
    </lineage>
</organism>
<proteinExistence type="evidence at protein level"/>
<keyword id="KW-1003">Cell membrane</keyword>
<keyword id="KW-0328">Glycosyltransferase</keyword>
<keyword id="KW-0472">Membrane</keyword>
<keyword id="KW-0511">Multifunctional enzyme</keyword>
<keyword id="KW-0677">Repeat</keyword>
<keyword id="KW-0808">Transferase</keyword>
<dbReference type="EC" id="2.4.1.212"/>
<dbReference type="EC" id="2.4.1.226"/>
<dbReference type="EMBL" id="AF067175">
    <property type="protein sequence ID" value="AAC67250.2"/>
    <property type="molecule type" value="Genomic_DNA"/>
</dbReference>
<dbReference type="EMBL" id="AF036004">
    <property type="protein sequence ID" value="AAC38318.2"/>
    <property type="molecule type" value="Genomic_DNA"/>
</dbReference>
<dbReference type="EMBL" id="AF237926">
    <property type="protein sequence ID" value="AAF68412.1"/>
    <property type="molecule type" value="Genomic_DNA"/>
</dbReference>
<dbReference type="PIR" id="T09595">
    <property type="entry name" value="T09595"/>
</dbReference>
<dbReference type="RefSeq" id="WP_005754202.1">
    <property type="nucleotide sequence ID" value="NZ_MAPR01000001.1"/>
</dbReference>
<dbReference type="RefSeq" id="WP_016504510.1">
    <property type="nucleotide sequence ID" value="NZ_UGSU01000002.1"/>
</dbReference>
<dbReference type="SMR" id="Q7BLV3"/>
<dbReference type="CAZy" id="GT2">
    <property type="family name" value="Glycosyltransferase Family 2"/>
</dbReference>
<dbReference type="BRENDA" id="2.4.1.212">
    <property type="organism ID" value="4558"/>
</dbReference>
<dbReference type="SABIO-RK" id="Q7BLV3"/>
<dbReference type="GO" id="GO:0005886">
    <property type="term" value="C:plasma membrane"/>
    <property type="evidence" value="ECO:0007669"/>
    <property type="project" value="UniProtKB-SubCell"/>
</dbReference>
<dbReference type="GO" id="GO:0050501">
    <property type="term" value="F:hyaluronan synthase activity"/>
    <property type="evidence" value="ECO:0007669"/>
    <property type="project" value="UniProtKB-EC"/>
</dbReference>
<dbReference type="GO" id="GO:0050510">
    <property type="term" value="F:N-acetylgalactosaminyl-proteoglycan 3-beta-glucuronosyltransferase activity"/>
    <property type="evidence" value="ECO:0007669"/>
    <property type="project" value="UniProtKB-EC"/>
</dbReference>
<dbReference type="Gene3D" id="3.90.550.10">
    <property type="entry name" value="Spore Coat Polysaccharide Biosynthesis Protein SpsA, Chain A"/>
    <property type="match status" value="2"/>
</dbReference>
<dbReference type="InterPro" id="IPR001173">
    <property type="entry name" value="Glyco_trans_2-like"/>
</dbReference>
<dbReference type="InterPro" id="IPR050834">
    <property type="entry name" value="Glycosyltransf_2"/>
</dbReference>
<dbReference type="InterPro" id="IPR029044">
    <property type="entry name" value="Nucleotide-diphossugar_trans"/>
</dbReference>
<dbReference type="PANTHER" id="PTHR43685">
    <property type="entry name" value="GLYCOSYLTRANSFERASE"/>
    <property type="match status" value="1"/>
</dbReference>
<dbReference type="PANTHER" id="PTHR43685:SF11">
    <property type="entry name" value="GLYCOSYLTRANSFERASE TAGX-RELATED"/>
    <property type="match status" value="1"/>
</dbReference>
<dbReference type="Pfam" id="PF00535">
    <property type="entry name" value="Glycos_transf_2"/>
    <property type="match status" value="2"/>
</dbReference>
<dbReference type="SUPFAM" id="SSF53448">
    <property type="entry name" value="Nucleotide-diphospho-sugar transferases"/>
    <property type="match status" value="2"/>
</dbReference>
<name>HAS_PASMD</name>
<sequence>MNTLSQAIKAYNSNDYQLALKLFEKSAEIYGRKIVEFQITKCKEKLSAHPSVNSAHLSVNKEEKVNVCDSPLDIATQLLLSNVKKLVLSDSEKNTLKNKWKLLTEKKSENAEVRAVALVPKDFPKDLVLAPLPDHVNDFTWYKKRKKRLGIKPEHQHVGLSIIVTTFNRPAILSITLACLVNQKTHYPFEVIVTDDGSQEDLSPIIRQYENKLDIRYVRQKDNGFQASAARNMGLRLAKYDFIGLLDCDMAPNPLWVHSYVAELLEDDDLTIIGPRKYIDTQHIDPKDFLNNASLLESLPEVKTNNSVAAKGEGTVSLDWRLEQFEKTENLRLSDSPFRFFAAGNVAFAKKWLNKSGFFDEEFNHWGGEDVEFGYRLFRYGSFFKTIDGIMAYHQEPPGKENETDREAGKNITLDIMREKVPYIYRKLLPIEDSHINRVPLVSIYIPAYNCANYIQRCVDSALNQTVVDLEVCICNDGSTDNTLEVINKLYGNNPRVRIMSKPNGGIASASNAAVSFAKGYYIGQLDSDDYLEPDAVELCLKEFLKDKTLACVYTTNRNVNPDGSLIANGYNWPEFSREKLTTAMIAHHFRMFTIRAWHLTDGFNEKIENAVDYDMFLKLSEVGKFKHLNKICYNRVLHGDNTSIKKLGIQKKNHFVVVNQSLNRQGITYYNYDEFDDLDESRKYIFNKTAEYQEEIDILKDIKIIQNKDAKIAVSIFYPNTLNGLVKKLNNIIEYNKNIFVIVLHVDKNHLTPDIKKEILAFYHKHQVNILLNNDISYYTSNRLIKTEAHLSNINKLSQLNLNCEYIIFDNHDSLFVKNDSYAYMKKYDVGMNFSALTHDWIEKINAHPPFKKLIKTYFNDNDLKSMNVKGASQGMFMTYALAHELLTIIKEVITSCQSIDSVPEYNTEDIWFQFALLILEKKTGHVFNKTSTLTYMPWERKLQWTNEQIESAKRGENIPVNKFIINSITL</sequence>
<evidence type="ECO:0000269" key="1">
    <source>
    </source>
</evidence>
<evidence type="ECO:0000269" key="2">
    <source>
    </source>
</evidence>
<evidence type="ECO:0000305" key="3"/>